<gene>
    <name evidence="1" type="primary">ruvB</name>
    <name type="ordered locus">BCA_4531</name>
</gene>
<proteinExistence type="inferred from homology"/>
<sequence>MDERLLSGESAYEDADLEYSLRPQTLRQYIGQDKAKHNLEVFIEAAKMREETLDHVLLYGPPGLGKTTLANIIANEMGVNVRTTSGPAIERPGDLAAVLTSLQPGDVLFIDEIHRLHRSIEEVLYPAMEDFCLDIVIGKGPSARSVRLDLPPFTLVGATTRAGALSAPLRDRFGVLSRLEYYTVDQLSAIVERTGEVFEVEINSLAALEIARRARGTPRIANRLLRRVRDFAQVRGNGTVTMEITQMALELLQVDKLGLDHIDHKLLLGIIEKFRGGPVGLETVSATIGEESHTIEDVYEPYLLQIGFLQRTPRGRIVTPLAYEHFGMEMPKV</sequence>
<accession>C1ESW4</accession>
<comment type="function">
    <text evidence="1">The RuvA-RuvB-RuvC complex processes Holliday junction (HJ) DNA during genetic recombination and DNA repair, while the RuvA-RuvB complex plays an important role in the rescue of blocked DNA replication forks via replication fork reversal (RFR). RuvA specifically binds to HJ cruciform DNA, conferring on it an open structure. The RuvB hexamer acts as an ATP-dependent pump, pulling dsDNA into and through the RuvAB complex. RuvB forms 2 homohexamers on either side of HJ DNA bound by 1 or 2 RuvA tetramers; 4 subunits per hexamer contact DNA at a time. Coordinated motions by a converter formed by DNA-disengaged RuvB subunits stimulates ATP hydrolysis and nucleotide exchange. Immobilization of the converter enables RuvB to convert the ATP-contained energy into a lever motion, pulling 2 nucleotides of DNA out of the RuvA tetramer per ATP hydrolyzed, thus driving DNA branch migration. The RuvB motors rotate together with the DNA substrate, which together with the progressing nucleotide cycle form the mechanistic basis for DNA recombination by continuous HJ branch migration. Branch migration allows RuvC to scan DNA until it finds its consensus sequence, where it cleaves and resolves cruciform DNA.</text>
</comment>
<comment type="catalytic activity">
    <reaction evidence="1">
        <text>ATP + H2O = ADP + phosphate + H(+)</text>
        <dbReference type="Rhea" id="RHEA:13065"/>
        <dbReference type="ChEBI" id="CHEBI:15377"/>
        <dbReference type="ChEBI" id="CHEBI:15378"/>
        <dbReference type="ChEBI" id="CHEBI:30616"/>
        <dbReference type="ChEBI" id="CHEBI:43474"/>
        <dbReference type="ChEBI" id="CHEBI:456216"/>
    </reaction>
</comment>
<comment type="subunit">
    <text evidence="1">Homohexamer. Forms an RuvA(8)-RuvB(12)-Holliday junction (HJ) complex. HJ DNA is sandwiched between 2 RuvA tetramers; dsDNA enters through RuvA and exits via RuvB. An RuvB hexamer assembles on each DNA strand where it exits the tetramer. Each RuvB hexamer is contacted by two RuvA subunits (via domain III) on 2 adjacent RuvB subunits; this complex drives branch migration. In the full resolvosome a probable DNA-RuvA(4)-RuvB(12)-RuvC(2) complex forms which resolves the HJ.</text>
</comment>
<comment type="subcellular location">
    <subcellularLocation>
        <location evidence="1">Cytoplasm</location>
    </subcellularLocation>
</comment>
<comment type="domain">
    <text evidence="1">Has 3 domains, the large (RuvB-L) and small ATPase (RuvB-S) domains and the C-terminal head (RuvB-H) domain. The head domain binds DNA, while the ATPase domains jointly bind ATP, ADP or are empty depending on the state of the subunit in the translocation cycle. During a single DNA translocation step the structure of each domain remains the same, but their relative positions change.</text>
</comment>
<comment type="similarity">
    <text evidence="1">Belongs to the RuvB family.</text>
</comment>
<protein>
    <recommendedName>
        <fullName evidence="1">Holliday junction branch migration complex subunit RuvB</fullName>
        <ecNumber evidence="1">3.6.4.-</ecNumber>
    </recommendedName>
</protein>
<reference key="1">
    <citation type="submission" date="2009-02" db="EMBL/GenBank/DDBJ databases">
        <title>Genome sequence of Bacillus cereus 03BB102.</title>
        <authorList>
            <person name="Dodson R.J."/>
            <person name="Jackson P."/>
            <person name="Munk A.C."/>
            <person name="Brettin T."/>
            <person name="Bruce D."/>
            <person name="Detter C."/>
            <person name="Tapia R."/>
            <person name="Han C."/>
            <person name="Sutton G."/>
            <person name="Sims D."/>
        </authorList>
    </citation>
    <scope>NUCLEOTIDE SEQUENCE [LARGE SCALE GENOMIC DNA]</scope>
    <source>
        <strain>03BB102</strain>
    </source>
</reference>
<name>RUVB_BACC3</name>
<feature type="chain" id="PRO_1000195198" description="Holliday junction branch migration complex subunit RuvB">
    <location>
        <begin position="1"/>
        <end position="333"/>
    </location>
</feature>
<feature type="region of interest" description="Large ATPase domain (RuvB-L)" evidence="1">
    <location>
        <begin position="1"/>
        <end position="182"/>
    </location>
</feature>
<feature type="region of interest" description="Small ATPAse domain (RuvB-S)" evidence="1">
    <location>
        <begin position="183"/>
        <end position="253"/>
    </location>
</feature>
<feature type="region of interest" description="Head domain (RuvB-H)" evidence="1">
    <location>
        <begin position="256"/>
        <end position="333"/>
    </location>
</feature>
<feature type="binding site" evidence="1">
    <location>
        <position position="21"/>
    </location>
    <ligand>
        <name>ATP</name>
        <dbReference type="ChEBI" id="CHEBI:30616"/>
    </ligand>
</feature>
<feature type="binding site" evidence="1">
    <location>
        <position position="22"/>
    </location>
    <ligand>
        <name>ATP</name>
        <dbReference type="ChEBI" id="CHEBI:30616"/>
    </ligand>
</feature>
<feature type="binding site" evidence="1">
    <location>
        <position position="63"/>
    </location>
    <ligand>
        <name>ATP</name>
        <dbReference type="ChEBI" id="CHEBI:30616"/>
    </ligand>
</feature>
<feature type="binding site" evidence="1">
    <location>
        <position position="66"/>
    </location>
    <ligand>
        <name>ATP</name>
        <dbReference type="ChEBI" id="CHEBI:30616"/>
    </ligand>
</feature>
<feature type="binding site" evidence="1">
    <location>
        <position position="67"/>
    </location>
    <ligand>
        <name>ATP</name>
        <dbReference type="ChEBI" id="CHEBI:30616"/>
    </ligand>
</feature>
<feature type="binding site" evidence="1">
    <location>
        <position position="67"/>
    </location>
    <ligand>
        <name>Mg(2+)</name>
        <dbReference type="ChEBI" id="CHEBI:18420"/>
    </ligand>
</feature>
<feature type="binding site" evidence="1">
    <location>
        <position position="68"/>
    </location>
    <ligand>
        <name>ATP</name>
        <dbReference type="ChEBI" id="CHEBI:30616"/>
    </ligand>
</feature>
<feature type="binding site" evidence="1">
    <location>
        <begin position="129"/>
        <end position="131"/>
    </location>
    <ligand>
        <name>ATP</name>
        <dbReference type="ChEBI" id="CHEBI:30616"/>
    </ligand>
</feature>
<feature type="binding site" evidence="1">
    <location>
        <position position="172"/>
    </location>
    <ligand>
        <name>ATP</name>
        <dbReference type="ChEBI" id="CHEBI:30616"/>
    </ligand>
</feature>
<feature type="binding site" evidence="1">
    <location>
        <position position="182"/>
    </location>
    <ligand>
        <name>ATP</name>
        <dbReference type="ChEBI" id="CHEBI:30616"/>
    </ligand>
</feature>
<feature type="binding site" evidence="1">
    <location>
        <position position="219"/>
    </location>
    <ligand>
        <name>ATP</name>
        <dbReference type="ChEBI" id="CHEBI:30616"/>
    </ligand>
</feature>
<feature type="binding site" evidence="1">
    <location>
        <position position="311"/>
    </location>
    <ligand>
        <name>DNA</name>
        <dbReference type="ChEBI" id="CHEBI:16991"/>
    </ligand>
</feature>
<feature type="binding site" evidence="1">
    <location>
        <position position="316"/>
    </location>
    <ligand>
        <name>DNA</name>
        <dbReference type="ChEBI" id="CHEBI:16991"/>
    </ligand>
</feature>
<dbReference type="EC" id="3.6.4.-" evidence="1"/>
<dbReference type="EMBL" id="CP001407">
    <property type="protein sequence ID" value="ACO28870.1"/>
    <property type="molecule type" value="Genomic_DNA"/>
</dbReference>
<dbReference type="RefSeq" id="WP_000344460.1">
    <property type="nucleotide sequence ID" value="NZ_CP009318.1"/>
</dbReference>
<dbReference type="SMR" id="C1ESW4"/>
<dbReference type="KEGG" id="bcx:BCA_4531"/>
<dbReference type="PATRIC" id="fig|572264.18.peg.4480"/>
<dbReference type="Proteomes" id="UP000002210">
    <property type="component" value="Chromosome"/>
</dbReference>
<dbReference type="GO" id="GO:0005737">
    <property type="term" value="C:cytoplasm"/>
    <property type="evidence" value="ECO:0007669"/>
    <property type="project" value="UniProtKB-SubCell"/>
</dbReference>
<dbReference type="GO" id="GO:0048476">
    <property type="term" value="C:Holliday junction resolvase complex"/>
    <property type="evidence" value="ECO:0007669"/>
    <property type="project" value="UniProtKB-UniRule"/>
</dbReference>
<dbReference type="GO" id="GO:0005524">
    <property type="term" value="F:ATP binding"/>
    <property type="evidence" value="ECO:0007669"/>
    <property type="project" value="UniProtKB-UniRule"/>
</dbReference>
<dbReference type="GO" id="GO:0016887">
    <property type="term" value="F:ATP hydrolysis activity"/>
    <property type="evidence" value="ECO:0007669"/>
    <property type="project" value="InterPro"/>
</dbReference>
<dbReference type="GO" id="GO:0000400">
    <property type="term" value="F:four-way junction DNA binding"/>
    <property type="evidence" value="ECO:0007669"/>
    <property type="project" value="UniProtKB-UniRule"/>
</dbReference>
<dbReference type="GO" id="GO:0009378">
    <property type="term" value="F:four-way junction helicase activity"/>
    <property type="evidence" value="ECO:0007669"/>
    <property type="project" value="InterPro"/>
</dbReference>
<dbReference type="GO" id="GO:0006310">
    <property type="term" value="P:DNA recombination"/>
    <property type="evidence" value="ECO:0007669"/>
    <property type="project" value="UniProtKB-UniRule"/>
</dbReference>
<dbReference type="GO" id="GO:0006281">
    <property type="term" value="P:DNA repair"/>
    <property type="evidence" value="ECO:0007669"/>
    <property type="project" value="UniProtKB-UniRule"/>
</dbReference>
<dbReference type="CDD" id="cd00009">
    <property type="entry name" value="AAA"/>
    <property type="match status" value="1"/>
</dbReference>
<dbReference type="Gene3D" id="1.10.8.60">
    <property type="match status" value="1"/>
</dbReference>
<dbReference type="Gene3D" id="3.40.50.300">
    <property type="entry name" value="P-loop containing nucleotide triphosphate hydrolases"/>
    <property type="match status" value="1"/>
</dbReference>
<dbReference type="Gene3D" id="1.10.10.10">
    <property type="entry name" value="Winged helix-like DNA-binding domain superfamily/Winged helix DNA-binding domain"/>
    <property type="match status" value="1"/>
</dbReference>
<dbReference type="HAMAP" id="MF_00016">
    <property type="entry name" value="DNA_HJ_migration_RuvB"/>
    <property type="match status" value="1"/>
</dbReference>
<dbReference type="InterPro" id="IPR003593">
    <property type="entry name" value="AAA+_ATPase"/>
</dbReference>
<dbReference type="InterPro" id="IPR041445">
    <property type="entry name" value="AAA_lid_4"/>
</dbReference>
<dbReference type="InterPro" id="IPR004605">
    <property type="entry name" value="DNA_helicase_Holl-junc_RuvB"/>
</dbReference>
<dbReference type="InterPro" id="IPR027417">
    <property type="entry name" value="P-loop_NTPase"/>
</dbReference>
<dbReference type="InterPro" id="IPR008824">
    <property type="entry name" value="RuvB-like_N"/>
</dbReference>
<dbReference type="InterPro" id="IPR008823">
    <property type="entry name" value="RuvB_C"/>
</dbReference>
<dbReference type="InterPro" id="IPR036388">
    <property type="entry name" value="WH-like_DNA-bd_sf"/>
</dbReference>
<dbReference type="InterPro" id="IPR036390">
    <property type="entry name" value="WH_DNA-bd_sf"/>
</dbReference>
<dbReference type="NCBIfam" id="NF000868">
    <property type="entry name" value="PRK00080.1"/>
    <property type="match status" value="1"/>
</dbReference>
<dbReference type="NCBIfam" id="TIGR00635">
    <property type="entry name" value="ruvB"/>
    <property type="match status" value="1"/>
</dbReference>
<dbReference type="PANTHER" id="PTHR42848">
    <property type="match status" value="1"/>
</dbReference>
<dbReference type="PANTHER" id="PTHR42848:SF1">
    <property type="entry name" value="HOLLIDAY JUNCTION BRANCH MIGRATION COMPLEX SUBUNIT RUVB"/>
    <property type="match status" value="1"/>
</dbReference>
<dbReference type="Pfam" id="PF17864">
    <property type="entry name" value="AAA_lid_4"/>
    <property type="match status" value="1"/>
</dbReference>
<dbReference type="Pfam" id="PF05491">
    <property type="entry name" value="RuvB_C"/>
    <property type="match status" value="1"/>
</dbReference>
<dbReference type="Pfam" id="PF05496">
    <property type="entry name" value="RuvB_N"/>
    <property type="match status" value="1"/>
</dbReference>
<dbReference type="SMART" id="SM00382">
    <property type="entry name" value="AAA"/>
    <property type="match status" value="1"/>
</dbReference>
<dbReference type="SUPFAM" id="SSF52540">
    <property type="entry name" value="P-loop containing nucleoside triphosphate hydrolases"/>
    <property type="match status" value="1"/>
</dbReference>
<dbReference type="SUPFAM" id="SSF46785">
    <property type="entry name" value="Winged helix' DNA-binding domain"/>
    <property type="match status" value="1"/>
</dbReference>
<evidence type="ECO:0000255" key="1">
    <source>
        <dbReference type="HAMAP-Rule" id="MF_00016"/>
    </source>
</evidence>
<organism>
    <name type="scientific">Bacillus cereus (strain 03BB102)</name>
    <dbReference type="NCBI Taxonomy" id="572264"/>
    <lineage>
        <taxon>Bacteria</taxon>
        <taxon>Bacillati</taxon>
        <taxon>Bacillota</taxon>
        <taxon>Bacilli</taxon>
        <taxon>Bacillales</taxon>
        <taxon>Bacillaceae</taxon>
        <taxon>Bacillus</taxon>
        <taxon>Bacillus cereus group</taxon>
    </lineage>
</organism>
<keyword id="KW-0067">ATP-binding</keyword>
<keyword id="KW-0963">Cytoplasm</keyword>
<keyword id="KW-0227">DNA damage</keyword>
<keyword id="KW-0233">DNA recombination</keyword>
<keyword id="KW-0234">DNA repair</keyword>
<keyword id="KW-0238">DNA-binding</keyword>
<keyword id="KW-0378">Hydrolase</keyword>
<keyword id="KW-0547">Nucleotide-binding</keyword>